<protein>
    <recommendedName>
        <fullName>Adenylyl cyclase-associated protein 2</fullName>
        <shortName>CAP 2</shortName>
    </recommendedName>
</protein>
<name>CAP2_MOUSE</name>
<proteinExistence type="evidence at protein level"/>
<evidence type="ECO:0000250" key="1"/>
<evidence type="ECO:0000250" key="2">
    <source>
        <dbReference type="UniProtKB" id="P40123"/>
    </source>
</evidence>
<evidence type="ECO:0000250" key="3">
    <source>
        <dbReference type="UniProtKB" id="P52481"/>
    </source>
</evidence>
<evidence type="ECO:0000255" key="4">
    <source>
        <dbReference type="PROSITE-ProRule" id="PRU00659"/>
    </source>
</evidence>
<evidence type="ECO:0000256" key="5">
    <source>
        <dbReference type="SAM" id="MobiDB-lite"/>
    </source>
</evidence>
<evidence type="ECO:0000269" key="6">
    <source>
    </source>
</evidence>
<evidence type="ECO:0000305" key="7"/>
<comment type="function">
    <text evidence="2">Involved in the regulation of actin polymerization.</text>
</comment>
<comment type="subcellular location">
    <subcellularLocation>
        <location evidence="1">Cell membrane</location>
        <topology evidence="1">Peripheral membrane protein</topology>
    </subcellularLocation>
</comment>
<comment type="tissue specificity">
    <text evidence="6">Expressed in the heart, skeletal muscle, and brain.</text>
</comment>
<comment type="disruption phenotype">
    <text evidence="6">Knockout male mice have a reduced survival rate, while females survive at close to the expected levels. Knockout mice are also prone to eye infections due to eye developmental defects, and surviving males develop dilated cardiomyopathy by 12 months of age. Male and female mice with cardiomyocyte-specific CAP2 deletion die suddenly due to complete heart block.</text>
</comment>
<comment type="similarity">
    <text evidence="7">Belongs to the CAP family.</text>
</comment>
<accession>Q9CYT6</accession>
<accession>Q80YU7</accession>
<accession>Q9D6L0</accession>
<organism>
    <name type="scientific">Mus musculus</name>
    <name type="common">Mouse</name>
    <dbReference type="NCBI Taxonomy" id="10090"/>
    <lineage>
        <taxon>Eukaryota</taxon>
        <taxon>Metazoa</taxon>
        <taxon>Chordata</taxon>
        <taxon>Craniata</taxon>
        <taxon>Vertebrata</taxon>
        <taxon>Euteleostomi</taxon>
        <taxon>Mammalia</taxon>
        <taxon>Eutheria</taxon>
        <taxon>Euarchontoglires</taxon>
        <taxon>Glires</taxon>
        <taxon>Rodentia</taxon>
        <taxon>Myomorpha</taxon>
        <taxon>Muroidea</taxon>
        <taxon>Muridae</taxon>
        <taxon>Murinae</taxon>
        <taxon>Mus</taxon>
        <taxon>Mus</taxon>
    </lineage>
</organism>
<reference key="1">
    <citation type="journal article" date="2005" name="Science">
        <title>The transcriptional landscape of the mammalian genome.</title>
        <authorList>
            <person name="Carninci P."/>
            <person name="Kasukawa T."/>
            <person name="Katayama S."/>
            <person name="Gough J."/>
            <person name="Frith M.C."/>
            <person name="Maeda N."/>
            <person name="Oyama R."/>
            <person name="Ravasi T."/>
            <person name="Lenhard B."/>
            <person name="Wells C."/>
            <person name="Kodzius R."/>
            <person name="Shimokawa K."/>
            <person name="Bajic V.B."/>
            <person name="Brenner S.E."/>
            <person name="Batalov S."/>
            <person name="Forrest A.R."/>
            <person name="Zavolan M."/>
            <person name="Davis M.J."/>
            <person name="Wilming L.G."/>
            <person name="Aidinis V."/>
            <person name="Allen J.E."/>
            <person name="Ambesi-Impiombato A."/>
            <person name="Apweiler R."/>
            <person name="Aturaliya R.N."/>
            <person name="Bailey T.L."/>
            <person name="Bansal M."/>
            <person name="Baxter L."/>
            <person name="Beisel K.W."/>
            <person name="Bersano T."/>
            <person name="Bono H."/>
            <person name="Chalk A.M."/>
            <person name="Chiu K.P."/>
            <person name="Choudhary V."/>
            <person name="Christoffels A."/>
            <person name="Clutterbuck D.R."/>
            <person name="Crowe M.L."/>
            <person name="Dalla E."/>
            <person name="Dalrymple B.P."/>
            <person name="de Bono B."/>
            <person name="Della Gatta G."/>
            <person name="di Bernardo D."/>
            <person name="Down T."/>
            <person name="Engstrom P."/>
            <person name="Fagiolini M."/>
            <person name="Faulkner G."/>
            <person name="Fletcher C.F."/>
            <person name="Fukushima T."/>
            <person name="Furuno M."/>
            <person name="Futaki S."/>
            <person name="Gariboldi M."/>
            <person name="Georgii-Hemming P."/>
            <person name="Gingeras T.R."/>
            <person name="Gojobori T."/>
            <person name="Green R.E."/>
            <person name="Gustincich S."/>
            <person name="Harbers M."/>
            <person name="Hayashi Y."/>
            <person name="Hensch T.K."/>
            <person name="Hirokawa N."/>
            <person name="Hill D."/>
            <person name="Huminiecki L."/>
            <person name="Iacono M."/>
            <person name="Ikeo K."/>
            <person name="Iwama A."/>
            <person name="Ishikawa T."/>
            <person name="Jakt M."/>
            <person name="Kanapin A."/>
            <person name="Katoh M."/>
            <person name="Kawasawa Y."/>
            <person name="Kelso J."/>
            <person name="Kitamura H."/>
            <person name="Kitano H."/>
            <person name="Kollias G."/>
            <person name="Krishnan S.P."/>
            <person name="Kruger A."/>
            <person name="Kummerfeld S.K."/>
            <person name="Kurochkin I.V."/>
            <person name="Lareau L.F."/>
            <person name="Lazarevic D."/>
            <person name="Lipovich L."/>
            <person name="Liu J."/>
            <person name="Liuni S."/>
            <person name="McWilliam S."/>
            <person name="Madan Babu M."/>
            <person name="Madera M."/>
            <person name="Marchionni L."/>
            <person name="Matsuda H."/>
            <person name="Matsuzawa S."/>
            <person name="Miki H."/>
            <person name="Mignone F."/>
            <person name="Miyake S."/>
            <person name="Morris K."/>
            <person name="Mottagui-Tabar S."/>
            <person name="Mulder N."/>
            <person name="Nakano N."/>
            <person name="Nakauchi H."/>
            <person name="Ng P."/>
            <person name="Nilsson R."/>
            <person name="Nishiguchi S."/>
            <person name="Nishikawa S."/>
            <person name="Nori F."/>
            <person name="Ohara O."/>
            <person name="Okazaki Y."/>
            <person name="Orlando V."/>
            <person name="Pang K.C."/>
            <person name="Pavan W.J."/>
            <person name="Pavesi G."/>
            <person name="Pesole G."/>
            <person name="Petrovsky N."/>
            <person name="Piazza S."/>
            <person name="Reed J."/>
            <person name="Reid J.F."/>
            <person name="Ring B.Z."/>
            <person name="Ringwald M."/>
            <person name="Rost B."/>
            <person name="Ruan Y."/>
            <person name="Salzberg S.L."/>
            <person name="Sandelin A."/>
            <person name="Schneider C."/>
            <person name="Schoenbach C."/>
            <person name="Sekiguchi K."/>
            <person name="Semple C.A."/>
            <person name="Seno S."/>
            <person name="Sessa L."/>
            <person name="Sheng Y."/>
            <person name="Shibata Y."/>
            <person name="Shimada H."/>
            <person name="Shimada K."/>
            <person name="Silva D."/>
            <person name="Sinclair B."/>
            <person name="Sperling S."/>
            <person name="Stupka E."/>
            <person name="Sugiura K."/>
            <person name="Sultana R."/>
            <person name="Takenaka Y."/>
            <person name="Taki K."/>
            <person name="Tammoja K."/>
            <person name="Tan S.L."/>
            <person name="Tang S."/>
            <person name="Taylor M.S."/>
            <person name="Tegner J."/>
            <person name="Teichmann S.A."/>
            <person name="Ueda H.R."/>
            <person name="van Nimwegen E."/>
            <person name="Verardo R."/>
            <person name="Wei C.L."/>
            <person name="Yagi K."/>
            <person name="Yamanishi H."/>
            <person name="Zabarovsky E."/>
            <person name="Zhu S."/>
            <person name="Zimmer A."/>
            <person name="Hide W."/>
            <person name="Bult C."/>
            <person name="Grimmond S.M."/>
            <person name="Teasdale R.D."/>
            <person name="Liu E.T."/>
            <person name="Brusic V."/>
            <person name="Quackenbush J."/>
            <person name="Wahlestedt C."/>
            <person name="Mattick J.S."/>
            <person name="Hume D.A."/>
            <person name="Kai C."/>
            <person name="Sasaki D."/>
            <person name="Tomaru Y."/>
            <person name="Fukuda S."/>
            <person name="Kanamori-Katayama M."/>
            <person name="Suzuki M."/>
            <person name="Aoki J."/>
            <person name="Arakawa T."/>
            <person name="Iida J."/>
            <person name="Imamura K."/>
            <person name="Itoh M."/>
            <person name="Kato T."/>
            <person name="Kawaji H."/>
            <person name="Kawagashira N."/>
            <person name="Kawashima T."/>
            <person name="Kojima M."/>
            <person name="Kondo S."/>
            <person name="Konno H."/>
            <person name="Nakano K."/>
            <person name="Ninomiya N."/>
            <person name="Nishio T."/>
            <person name="Okada M."/>
            <person name="Plessy C."/>
            <person name="Shibata K."/>
            <person name="Shiraki T."/>
            <person name="Suzuki S."/>
            <person name="Tagami M."/>
            <person name="Waki K."/>
            <person name="Watahiki A."/>
            <person name="Okamura-Oho Y."/>
            <person name="Suzuki H."/>
            <person name="Kawai J."/>
            <person name="Hayashizaki Y."/>
        </authorList>
    </citation>
    <scope>NUCLEOTIDE SEQUENCE [LARGE SCALE MRNA]</scope>
    <source>
        <strain>C57BL/6J</strain>
        <tissue>Embryo</tissue>
        <tissue>Tongue</tissue>
    </source>
</reference>
<reference key="2">
    <citation type="journal article" date="2004" name="Genome Res.">
        <title>The status, quality, and expansion of the NIH full-length cDNA project: the Mammalian Gene Collection (MGC).</title>
        <authorList>
            <consortium name="The MGC Project Team"/>
        </authorList>
    </citation>
    <scope>NUCLEOTIDE SEQUENCE [LARGE SCALE MRNA]</scope>
    <source>
        <strain>NMRI</strain>
        <tissue>Brain</tissue>
        <tissue>Mammary gland</tissue>
    </source>
</reference>
<reference key="3">
    <citation type="journal article" date="2007" name="Mol. Cell. Proteomics">
        <title>Qualitative and quantitative analyses of protein phosphorylation in naive and stimulated mouse synaptosomal preparations.</title>
        <authorList>
            <person name="Munton R.P."/>
            <person name="Tweedie-Cullen R."/>
            <person name="Livingstone-Zatchej M."/>
            <person name="Weinandy F."/>
            <person name="Waidelich M."/>
            <person name="Longo D."/>
            <person name="Gehrig P."/>
            <person name="Potthast F."/>
            <person name="Rutishauser D."/>
            <person name="Gerrits B."/>
            <person name="Panse C."/>
            <person name="Schlapbach R."/>
            <person name="Mansuy I.M."/>
        </authorList>
    </citation>
    <scope>IDENTIFICATION BY MASS SPECTROMETRY [LARGE SCALE ANALYSIS]</scope>
    <source>
        <tissue>Brain cortex</tissue>
    </source>
</reference>
<reference key="4">
    <citation type="journal article" date="2010" name="Cell">
        <title>A tissue-specific atlas of mouse protein phosphorylation and expression.</title>
        <authorList>
            <person name="Huttlin E.L."/>
            <person name="Jedrychowski M.P."/>
            <person name="Elias J.E."/>
            <person name="Goswami T."/>
            <person name="Rad R."/>
            <person name="Beausoleil S.A."/>
            <person name="Villen J."/>
            <person name="Haas W."/>
            <person name="Sowa M.E."/>
            <person name="Gygi S.P."/>
        </authorList>
    </citation>
    <scope>IDENTIFICATION BY MASS SPECTROMETRY [LARGE SCALE ANALYSIS]</scope>
    <source>
        <tissue>Brain</tissue>
        <tissue>Heart</tissue>
        <tissue>Testis</tissue>
    </source>
</reference>
<reference key="5">
    <citation type="journal article" date="2015" name="Sci. Rep.">
        <title>CAP2 in cardiac conduction, sudden cardiac death and eye development.</title>
        <authorList>
            <person name="Field J."/>
            <person name="Ye D.Z."/>
            <person name="Shinde M."/>
            <person name="Liu F."/>
            <person name="Schillinger K.J."/>
            <person name="Lu M."/>
            <person name="Wang T."/>
            <person name="Skettini M."/>
            <person name="Xiong Y."/>
            <person name="Brice A.K."/>
            <person name="Chung D.C."/>
            <person name="Patel V.V."/>
        </authorList>
    </citation>
    <scope>TISSUE SPECIFICITY</scope>
    <scope>DISRUPTION PHENOTYPE</scope>
</reference>
<reference key="6">
    <citation type="journal article" date="2016" name="Sci. Rep.">
        <authorList>
            <person name="Field J."/>
            <person name="Ye D.Z."/>
            <person name="Shinde M."/>
            <person name="Liu F."/>
            <person name="Schillinger K.J."/>
            <person name="Lu M."/>
            <person name="Wang T."/>
            <person name="Skettini M."/>
            <person name="Xiong Y."/>
            <person name="Brice A.K."/>
            <person name="Chung D.C."/>
            <person name="Patel V.V."/>
        </authorList>
    </citation>
    <scope>ERRATUM OF PUBMED:26616005</scope>
</reference>
<feature type="chain" id="PRO_0000205701" description="Adenylyl cyclase-associated protein 2">
    <location>
        <begin position="1"/>
        <end position="476"/>
    </location>
</feature>
<feature type="domain" description="C-CAP/cofactor C-like" evidence="4">
    <location>
        <begin position="317"/>
        <end position="454"/>
    </location>
</feature>
<feature type="region of interest" description="Disordered" evidence="5">
    <location>
        <begin position="223"/>
        <end position="322"/>
    </location>
</feature>
<feature type="compositionally biased region" description="Pro residues" evidence="5">
    <location>
        <begin position="230"/>
        <end position="247"/>
    </location>
</feature>
<feature type="compositionally biased region" description="Polar residues" evidence="5">
    <location>
        <begin position="288"/>
        <end position="299"/>
    </location>
</feature>
<feature type="compositionally biased region" description="Low complexity" evidence="5">
    <location>
        <begin position="300"/>
        <end position="317"/>
    </location>
</feature>
<feature type="modified residue" description="Phosphoserine" evidence="3">
    <location>
        <position position="300"/>
    </location>
</feature>
<feature type="modified residue" description="Phosphoserine" evidence="2">
    <location>
        <position position="308"/>
    </location>
</feature>
<feature type="sequence conflict" description="In Ref. 1; BAB26786." evidence="7" ref="1">
    <original>H</original>
    <variation>D</variation>
    <location>
        <position position="132"/>
    </location>
</feature>
<sequence length="476" mass="52862">MTDMAGLMERLERAVIRLEQLSAGLDGPPRGCGEVNGVNGGVAPSVEAFDKLINSMVAEFLKNSRVLAGDVETHAEMVHGAFQAQRAFLLMVSQYQQPQENEVAVLLKPISEKIQEIQTFRERNRGSNMFNHLSAVSESIAALGWIAVSPKPGPYVKEMNDAATFYTNRVLKDYKHSDLRHVDWVRSYLNIWSELQAYIREHHTTGLTWSKTGPVASTASAFSILSSGPGLPPPPPPPPPPGPPPPFENEDKKEEPSPSRSALFAQLNQGEAITKGLRHVTDDKKTYKNPSLRAQGQIRSPTKTHTPSPTSPKSNSPQKHTPVLELEGKKWRVEYQEDRNDLVISETELKQVAYIFKCDKSTLQIKGKVNSITVDNCKKFGLVFDHVVGIVEVINSKDIQIQVMGRVPTISINKTEGCHLYLSEDALDCEIVSAKSSEMNVLVPQDDDYREFPIPEQFKTIWDGSKLVTEPAEIMA</sequence>
<keyword id="KW-1003">Cell membrane</keyword>
<keyword id="KW-0472">Membrane</keyword>
<keyword id="KW-0597">Phosphoprotein</keyword>
<keyword id="KW-1185">Reference proteome</keyword>
<gene>
    <name type="primary">Cap2</name>
</gene>
<dbReference type="EMBL" id="AK010235">
    <property type="protein sequence ID" value="BAB26786.1"/>
    <property type="molecule type" value="mRNA"/>
</dbReference>
<dbReference type="EMBL" id="AK013331">
    <property type="protein sequence ID" value="BAB28795.1"/>
    <property type="molecule type" value="mRNA"/>
</dbReference>
<dbReference type="EMBL" id="AK033071">
    <property type="protein sequence ID" value="BAC28143.1"/>
    <property type="molecule type" value="mRNA"/>
</dbReference>
<dbReference type="EMBL" id="AK035556">
    <property type="protein sequence ID" value="BAC29104.1"/>
    <property type="molecule type" value="mRNA"/>
</dbReference>
<dbReference type="EMBL" id="BC050752">
    <property type="protein sequence ID" value="AAH50752.2"/>
    <property type="molecule type" value="mRNA"/>
</dbReference>
<dbReference type="EMBL" id="BC057937">
    <property type="protein sequence ID" value="AAH57937.1"/>
    <property type="molecule type" value="mRNA"/>
</dbReference>
<dbReference type="CCDS" id="CCDS26484.1"/>
<dbReference type="RefSeq" id="NP_080332.1">
    <property type="nucleotide sequence ID" value="NM_026056.4"/>
</dbReference>
<dbReference type="RefSeq" id="XP_030103239.1">
    <property type="nucleotide sequence ID" value="XM_030247379.1"/>
</dbReference>
<dbReference type="SMR" id="Q9CYT6"/>
<dbReference type="BioGRID" id="212048">
    <property type="interactions" value="11"/>
</dbReference>
<dbReference type="FunCoup" id="Q9CYT6">
    <property type="interactions" value="608"/>
</dbReference>
<dbReference type="IntAct" id="Q9CYT6">
    <property type="interactions" value="2"/>
</dbReference>
<dbReference type="MINT" id="Q9CYT6"/>
<dbReference type="STRING" id="10090.ENSMUSP00000021802"/>
<dbReference type="GlyGen" id="Q9CYT6">
    <property type="glycosylation" value="2 sites, 1 O-linked glycan (1 site)"/>
</dbReference>
<dbReference type="iPTMnet" id="Q9CYT6"/>
<dbReference type="MetOSite" id="Q9CYT6"/>
<dbReference type="PhosphoSitePlus" id="Q9CYT6"/>
<dbReference type="SwissPalm" id="Q9CYT6"/>
<dbReference type="jPOST" id="Q9CYT6"/>
<dbReference type="PaxDb" id="10090-ENSMUSP00000021802"/>
<dbReference type="PeptideAtlas" id="Q9CYT6"/>
<dbReference type="ProteomicsDB" id="265330"/>
<dbReference type="Antibodypedia" id="25070">
    <property type="antibodies" value="200 antibodies from 25 providers"/>
</dbReference>
<dbReference type="DNASU" id="67252"/>
<dbReference type="Ensembl" id="ENSMUST00000021802.16">
    <property type="protein sequence ID" value="ENSMUSP00000021802.9"/>
    <property type="gene ID" value="ENSMUSG00000021373.17"/>
</dbReference>
<dbReference type="GeneID" id="67252"/>
<dbReference type="KEGG" id="mmu:67252"/>
<dbReference type="UCSC" id="uc007qhf.2">
    <property type="organism name" value="mouse"/>
</dbReference>
<dbReference type="AGR" id="MGI:1914502"/>
<dbReference type="CTD" id="10486"/>
<dbReference type="MGI" id="MGI:1914502">
    <property type="gene designation" value="Cap2"/>
</dbReference>
<dbReference type="VEuPathDB" id="HostDB:ENSMUSG00000021373"/>
<dbReference type="eggNOG" id="KOG2675">
    <property type="taxonomic scope" value="Eukaryota"/>
</dbReference>
<dbReference type="GeneTree" id="ENSGT00390000017955"/>
<dbReference type="HOGENOM" id="CLU_015780_1_1_1"/>
<dbReference type="InParanoid" id="Q9CYT6"/>
<dbReference type="OMA" id="PISDHIH"/>
<dbReference type="OrthoDB" id="1601at2759"/>
<dbReference type="PhylomeDB" id="Q9CYT6"/>
<dbReference type="TreeFam" id="TF313791"/>
<dbReference type="BRENDA" id="2.1.1.296">
    <property type="organism ID" value="3474"/>
</dbReference>
<dbReference type="BioGRID-ORCS" id="67252">
    <property type="hits" value="3 hits in 81 CRISPR screens"/>
</dbReference>
<dbReference type="ChiTaRS" id="Cap2">
    <property type="organism name" value="mouse"/>
</dbReference>
<dbReference type="PRO" id="PR:Q9CYT6"/>
<dbReference type="Proteomes" id="UP000000589">
    <property type="component" value="Chromosome 13"/>
</dbReference>
<dbReference type="RNAct" id="Q9CYT6">
    <property type="molecule type" value="protein"/>
</dbReference>
<dbReference type="Bgee" id="ENSMUSG00000021373">
    <property type="expression patterns" value="Expressed in hindlimb stylopod muscle and 228 other cell types or tissues"/>
</dbReference>
<dbReference type="ExpressionAtlas" id="Q9CYT6">
    <property type="expression patterns" value="baseline and differential"/>
</dbReference>
<dbReference type="GO" id="GO:0005886">
    <property type="term" value="C:plasma membrane"/>
    <property type="evidence" value="ECO:0007669"/>
    <property type="project" value="UniProtKB-SubCell"/>
</dbReference>
<dbReference type="GO" id="GO:0014069">
    <property type="term" value="C:postsynaptic density"/>
    <property type="evidence" value="ECO:0000314"/>
    <property type="project" value="MGI"/>
</dbReference>
<dbReference type="GO" id="GO:0003779">
    <property type="term" value="F:actin binding"/>
    <property type="evidence" value="ECO:0007669"/>
    <property type="project" value="InterPro"/>
</dbReference>
<dbReference type="GO" id="GO:0042802">
    <property type="term" value="F:identical protein binding"/>
    <property type="evidence" value="ECO:0007669"/>
    <property type="project" value="Ensembl"/>
</dbReference>
<dbReference type="GO" id="GO:0099140">
    <property type="term" value="P:presynaptic actin cytoskeleton organization"/>
    <property type="evidence" value="ECO:0000314"/>
    <property type="project" value="SynGO"/>
</dbReference>
<dbReference type="FunFam" id="1.25.40.330:FF:000001">
    <property type="entry name" value="Adenylyl cyclase-associated protein"/>
    <property type="match status" value="1"/>
</dbReference>
<dbReference type="FunFam" id="2.160.20.70:FF:000001">
    <property type="entry name" value="Adenylyl cyclase-associated protein"/>
    <property type="match status" value="1"/>
</dbReference>
<dbReference type="Gene3D" id="2.160.20.70">
    <property type="match status" value="1"/>
</dbReference>
<dbReference type="Gene3D" id="1.25.40.330">
    <property type="entry name" value="Adenylate cyclase-associated CAP, N-terminal domain"/>
    <property type="match status" value="1"/>
</dbReference>
<dbReference type="InterPro" id="IPR001837">
    <property type="entry name" value="Adenylate_cyclase-assoc_CAP"/>
</dbReference>
<dbReference type="InterPro" id="IPR013912">
    <property type="entry name" value="Adenylate_cyclase-assoc_CAP_C"/>
</dbReference>
<dbReference type="InterPro" id="IPR013992">
    <property type="entry name" value="Adenylate_cyclase-assoc_CAP_N"/>
</dbReference>
<dbReference type="InterPro" id="IPR017901">
    <property type="entry name" value="C-CAP_CF_C-like"/>
</dbReference>
<dbReference type="InterPro" id="IPR016098">
    <property type="entry name" value="CAP/MinC_C"/>
</dbReference>
<dbReference type="InterPro" id="IPR036223">
    <property type="entry name" value="CAP_C_sf"/>
</dbReference>
<dbReference type="InterPro" id="IPR028417">
    <property type="entry name" value="CAP_CS_C"/>
</dbReference>
<dbReference type="InterPro" id="IPR018106">
    <property type="entry name" value="CAP_CS_N"/>
</dbReference>
<dbReference type="InterPro" id="IPR053950">
    <property type="entry name" value="CAP_N"/>
</dbReference>
<dbReference type="InterPro" id="IPR036222">
    <property type="entry name" value="CAP_N_sf"/>
</dbReference>
<dbReference type="InterPro" id="IPR006599">
    <property type="entry name" value="CARP_motif"/>
</dbReference>
<dbReference type="PANTHER" id="PTHR10652">
    <property type="entry name" value="ADENYLYL CYCLASE-ASSOCIATED PROTEIN"/>
    <property type="match status" value="1"/>
</dbReference>
<dbReference type="PANTHER" id="PTHR10652:SF2">
    <property type="entry name" value="ADENYLYL CYCLASE-ASSOCIATED PROTEIN 2"/>
    <property type="match status" value="1"/>
</dbReference>
<dbReference type="Pfam" id="PF08603">
    <property type="entry name" value="CAP_C"/>
    <property type="match status" value="1"/>
</dbReference>
<dbReference type="Pfam" id="PF21938">
    <property type="entry name" value="CAP_N"/>
    <property type="match status" value="1"/>
</dbReference>
<dbReference type="Pfam" id="PF01213">
    <property type="entry name" value="CAP_N-CM"/>
    <property type="match status" value="1"/>
</dbReference>
<dbReference type="SMART" id="SM00673">
    <property type="entry name" value="CARP"/>
    <property type="match status" value="2"/>
</dbReference>
<dbReference type="SUPFAM" id="SSF69340">
    <property type="entry name" value="C-terminal domain of adenylylcyclase associated protein"/>
    <property type="match status" value="1"/>
</dbReference>
<dbReference type="SUPFAM" id="SSF101278">
    <property type="entry name" value="N-terminal domain of adenylylcyclase associated protein, CAP"/>
    <property type="match status" value="1"/>
</dbReference>
<dbReference type="PROSITE" id="PS51329">
    <property type="entry name" value="C_CAP_COFACTOR_C"/>
    <property type="match status" value="1"/>
</dbReference>
<dbReference type="PROSITE" id="PS01088">
    <property type="entry name" value="CAP_1"/>
    <property type="match status" value="1"/>
</dbReference>
<dbReference type="PROSITE" id="PS01089">
    <property type="entry name" value="CAP_2"/>
    <property type="match status" value="1"/>
</dbReference>